<comment type="function">
    <text evidence="1">Probable carboxypeptidase.</text>
</comment>
<comment type="subcellular location">
    <subcellularLocation>
        <location evidence="4">Secreted</location>
    </subcellularLocation>
</comment>
<comment type="tissue specificity">
    <text evidence="3">Ubiquitous.</text>
</comment>
<comment type="similarity">
    <text evidence="4">Belongs to the peptidase S10 family.</text>
</comment>
<feature type="signal peptide" evidence="2">
    <location>
        <begin position="1"/>
        <end position="20"/>
    </location>
</feature>
<feature type="chain" id="PRO_0000274642" description="Serine carboxypeptidase-like 27">
    <location>
        <begin position="21"/>
        <end position="459"/>
    </location>
</feature>
<feature type="active site" evidence="1">
    <location>
        <position position="184"/>
    </location>
</feature>
<feature type="active site" evidence="1">
    <location>
        <position position="381"/>
    </location>
</feature>
<feature type="active site" evidence="1">
    <location>
        <position position="433"/>
    </location>
</feature>
<feature type="glycosylation site" description="N-linked (GlcNAc...) asparagine" evidence="2">
    <location>
        <position position="142"/>
    </location>
</feature>
<feature type="glycosylation site" description="N-linked (GlcNAc...) asparagine" evidence="2">
    <location>
        <position position="289"/>
    </location>
</feature>
<feature type="glycosylation site" description="N-linked (GlcNAc...) asparagine" evidence="2">
    <location>
        <position position="333"/>
    </location>
</feature>
<feature type="disulfide bond" evidence="1">
    <location>
        <begin position="91"/>
        <end position="344"/>
    </location>
</feature>
<feature type="disulfide bond" evidence="1">
    <location>
        <begin position="252"/>
        <end position="264"/>
    </location>
</feature>
<feature type="disulfide bond" evidence="1">
    <location>
        <begin position="288"/>
        <end position="312"/>
    </location>
</feature>
<evidence type="ECO:0000250" key="1"/>
<evidence type="ECO:0000255" key="2"/>
<evidence type="ECO:0000269" key="3">
    <source>
    </source>
</evidence>
<evidence type="ECO:0000305" key="4"/>
<gene>
    <name type="primary">SCPL27</name>
    <name type="ordered locus">At3g07990</name>
    <name type="ORF">F17A17.33</name>
</gene>
<dbReference type="EC" id="3.4.16.-"/>
<dbReference type="EMBL" id="AC013483">
    <property type="protein sequence ID" value="AAF21209.1"/>
    <property type="molecule type" value="Genomic_DNA"/>
</dbReference>
<dbReference type="EMBL" id="CP002686">
    <property type="protein sequence ID" value="AEE74628.1"/>
    <property type="molecule type" value="Genomic_DNA"/>
</dbReference>
<dbReference type="EMBL" id="BT015083">
    <property type="protein sequence ID" value="AAT71955.1"/>
    <property type="molecule type" value="mRNA"/>
</dbReference>
<dbReference type="EMBL" id="BT015904">
    <property type="protein sequence ID" value="AAU95440.1"/>
    <property type="molecule type" value="mRNA"/>
</dbReference>
<dbReference type="RefSeq" id="NP_187456.1">
    <property type="nucleotide sequence ID" value="NM_111678.3"/>
</dbReference>
<dbReference type="SMR" id="Q9SFB5"/>
<dbReference type="FunCoup" id="Q9SFB5">
    <property type="interactions" value="28"/>
</dbReference>
<dbReference type="STRING" id="3702.Q9SFB5"/>
<dbReference type="ESTHER" id="arath-SCP27">
    <property type="family name" value="Carboxypeptidase_S10"/>
</dbReference>
<dbReference type="MEROPS" id="S10.A23"/>
<dbReference type="GlyCosmos" id="Q9SFB5">
    <property type="glycosylation" value="3 sites, No reported glycans"/>
</dbReference>
<dbReference type="GlyGen" id="Q9SFB5">
    <property type="glycosylation" value="3 sites"/>
</dbReference>
<dbReference type="PaxDb" id="3702-AT3G07990.1"/>
<dbReference type="ProteomicsDB" id="232704"/>
<dbReference type="EnsemblPlants" id="AT3G07990.1">
    <property type="protein sequence ID" value="AT3G07990.1"/>
    <property type="gene ID" value="AT3G07990"/>
</dbReference>
<dbReference type="GeneID" id="819990"/>
<dbReference type="Gramene" id="AT3G07990.1">
    <property type="protein sequence ID" value="AT3G07990.1"/>
    <property type="gene ID" value="AT3G07990"/>
</dbReference>
<dbReference type="KEGG" id="ath:AT3G07990"/>
<dbReference type="Araport" id="AT3G07990"/>
<dbReference type="TAIR" id="AT3G07990">
    <property type="gene designation" value="SCPL27"/>
</dbReference>
<dbReference type="eggNOG" id="KOG1282">
    <property type="taxonomic scope" value="Eukaryota"/>
</dbReference>
<dbReference type="HOGENOM" id="CLU_008523_13_0_1"/>
<dbReference type="InParanoid" id="Q9SFB5"/>
<dbReference type="OMA" id="DTSCRIH"/>
<dbReference type="OrthoDB" id="443318at2759"/>
<dbReference type="PhylomeDB" id="Q9SFB5"/>
<dbReference type="PRO" id="PR:Q9SFB5"/>
<dbReference type="Proteomes" id="UP000006548">
    <property type="component" value="Chromosome 3"/>
</dbReference>
<dbReference type="ExpressionAtlas" id="Q9SFB5">
    <property type="expression patterns" value="baseline and differential"/>
</dbReference>
<dbReference type="GO" id="GO:0005576">
    <property type="term" value="C:extracellular region"/>
    <property type="evidence" value="ECO:0007669"/>
    <property type="project" value="UniProtKB-SubCell"/>
</dbReference>
<dbReference type="GO" id="GO:0004185">
    <property type="term" value="F:serine-type carboxypeptidase activity"/>
    <property type="evidence" value="ECO:0007669"/>
    <property type="project" value="InterPro"/>
</dbReference>
<dbReference type="GO" id="GO:0006508">
    <property type="term" value="P:proteolysis"/>
    <property type="evidence" value="ECO:0007669"/>
    <property type="project" value="UniProtKB-KW"/>
</dbReference>
<dbReference type="FunFam" id="3.40.50.11320:FF:000003">
    <property type="entry name" value="Carboxypeptidase"/>
    <property type="match status" value="1"/>
</dbReference>
<dbReference type="FunFam" id="3.40.50.1820:FF:000013">
    <property type="entry name" value="Carboxypeptidase"/>
    <property type="match status" value="1"/>
</dbReference>
<dbReference type="Gene3D" id="3.40.50.11320">
    <property type="match status" value="1"/>
</dbReference>
<dbReference type="Gene3D" id="6.10.250.940">
    <property type="match status" value="1"/>
</dbReference>
<dbReference type="Gene3D" id="3.40.50.1820">
    <property type="entry name" value="alpha/beta hydrolase"/>
    <property type="match status" value="1"/>
</dbReference>
<dbReference type="InterPro" id="IPR029058">
    <property type="entry name" value="AB_hydrolase_fold"/>
</dbReference>
<dbReference type="InterPro" id="IPR001563">
    <property type="entry name" value="Peptidase_S10"/>
</dbReference>
<dbReference type="InterPro" id="IPR033124">
    <property type="entry name" value="Ser_caboxypep_his_AS"/>
</dbReference>
<dbReference type="InterPro" id="IPR018202">
    <property type="entry name" value="Ser_caboxypep_ser_AS"/>
</dbReference>
<dbReference type="PANTHER" id="PTHR11802:SF198">
    <property type="entry name" value="SERINE CARBOXYPEPTIDASE-LIKE 27"/>
    <property type="match status" value="1"/>
</dbReference>
<dbReference type="PANTHER" id="PTHR11802">
    <property type="entry name" value="SERINE PROTEASE FAMILY S10 SERINE CARBOXYPEPTIDASE"/>
    <property type="match status" value="1"/>
</dbReference>
<dbReference type="Pfam" id="PF00450">
    <property type="entry name" value="Peptidase_S10"/>
    <property type="match status" value="1"/>
</dbReference>
<dbReference type="PRINTS" id="PR00724">
    <property type="entry name" value="CRBOXYPTASEC"/>
</dbReference>
<dbReference type="SUPFAM" id="SSF53474">
    <property type="entry name" value="alpha/beta-Hydrolases"/>
    <property type="match status" value="1"/>
</dbReference>
<dbReference type="PROSITE" id="PS00560">
    <property type="entry name" value="CARBOXYPEPT_SER_HIS"/>
    <property type="match status" value="1"/>
</dbReference>
<dbReference type="PROSITE" id="PS00131">
    <property type="entry name" value="CARBOXYPEPT_SER_SER"/>
    <property type="match status" value="1"/>
</dbReference>
<sequence length="459" mass="52141">MDYSFLLIILLLTISTSCCAAPSSYVEEQLRDRISNLPGQPSNVDFRQYSGYVTVHEERGRALFYWLVESPLARDPKSRPLVLWLNGGPGCSSVAYGAAEEIGPFRVGSDGKTLHSKLYAWNKLANLLFLESPAGVGFSYSNTTSDLYTTGDQRTAEDSYIFLVNWFERFPQYKHREFYIVGESYAGHFVPQLSKLVHERNKGFKNPAINLKGFMVGNAVTDDYHDYIGTFEYWWNHGLISDSTYHQLKTACYSVSSQHPSMQCMVALRNAELEQGNIDPYSIFTKPCNSTVALKRFLKGRYPWMSRAYDPCTERYSNVYFNRLDVQKALHANVTRLSYPWKACSDIVGSYWDDSPLSMLPIYKELITAGLKIWVFSGDTDAVVPITATRYSVDALKLATITNWYPWYDHGKVGGWSQVYKGLTLVTVAGAGHEVPLHRPRQAFILFRSFLESKPMPMT</sequence>
<keyword id="KW-0121">Carboxypeptidase</keyword>
<keyword id="KW-1015">Disulfide bond</keyword>
<keyword id="KW-0325">Glycoprotein</keyword>
<keyword id="KW-0378">Hydrolase</keyword>
<keyword id="KW-0645">Protease</keyword>
<keyword id="KW-1185">Reference proteome</keyword>
<keyword id="KW-0964">Secreted</keyword>
<keyword id="KW-0732">Signal</keyword>
<organism>
    <name type="scientific">Arabidopsis thaliana</name>
    <name type="common">Mouse-ear cress</name>
    <dbReference type="NCBI Taxonomy" id="3702"/>
    <lineage>
        <taxon>Eukaryota</taxon>
        <taxon>Viridiplantae</taxon>
        <taxon>Streptophyta</taxon>
        <taxon>Embryophyta</taxon>
        <taxon>Tracheophyta</taxon>
        <taxon>Spermatophyta</taxon>
        <taxon>Magnoliopsida</taxon>
        <taxon>eudicotyledons</taxon>
        <taxon>Gunneridae</taxon>
        <taxon>Pentapetalae</taxon>
        <taxon>rosids</taxon>
        <taxon>malvids</taxon>
        <taxon>Brassicales</taxon>
        <taxon>Brassicaceae</taxon>
        <taxon>Camelineae</taxon>
        <taxon>Arabidopsis</taxon>
    </lineage>
</organism>
<name>SCP27_ARATH</name>
<reference key="1">
    <citation type="journal article" date="2000" name="Nature">
        <title>Sequence and analysis of chromosome 3 of the plant Arabidopsis thaliana.</title>
        <authorList>
            <person name="Salanoubat M."/>
            <person name="Lemcke K."/>
            <person name="Rieger M."/>
            <person name="Ansorge W."/>
            <person name="Unseld M."/>
            <person name="Fartmann B."/>
            <person name="Valle G."/>
            <person name="Bloecker H."/>
            <person name="Perez-Alonso M."/>
            <person name="Obermaier B."/>
            <person name="Delseny M."/>
            <person name="Boutry M."/>
            <person name="Grivell L.A."/>
            <person name="Mache R."/>
            <person name="Puigdomenech P."/>
            <person name="De Simone V."/>
            <person name="Choisne N."/>
            <person name="Artiguenave F."/>
            <person name="Robert C."/>
            <person name="Brottier P."/>
            <person name="Wincker P."/>
            <person name="Cattolico L."/>
            <person name="Weissenbach J."/>
            <person name="Saurin W."/>
            <person name="Quetier F."/>
            <person name="Schaefer M."/>
            <person name="Mueller-Auer S."/>
            <person name="Gabel C."/>
            <person name="Fuchs M."/>
            <person name="Benes V."/>
            <person name="Wurmbach E."/>
            <person name="Drzonek H."/>
            <person name="Erfle H."/>
            <person name="Jordan N."/>
            <person name="Bangert S."/>
            <person name="Wiedelmann R."/>
            <person name="Kranz H."/>
            <person name="Voss H."/>
            <person name="Holland R."/>
            <person name="Brandt P."/>
            <person name="Nyakatura G."/>
            <person name="Vezzi A."/>
            <person name="D'Angelo M."/>
            <person name="Pallavicini A."/>
            <person name="Toppo S."/>
            <person name="Simionati B."/>
            <person name="Conrad A."/>
            <person name="Hornischer K."/>
            <person name="Kauer G."/>
            <person name="Loehnert T.-H."/>
            <person name="Nordsiek G."/>
            <person name="Reichelt J."/>
            <person name="Scharfe M."/>
            <person name="Schoen O."/>
            <person name="Bargues M."/>
            <person name="Terol J."/>
            <person name="Climent J."/>
            <person name="Navarro P."/>
            <person name="Collado C."/>
            <person name="Perez-Perez A."/>
            <person name="Ottenwaelder B."/>
            <person name="Duchemin D."/>
            <person name="Cooke R."/>
            <person name="Laudie M."/>
            <person name="Berger-Llauro C."/>
            <person name="Purnelle B."/>
            <person name="Masuy D."/>
            <person name="de Haan M."/>
            <person name="Maarse A.C."/>
            <person name="Alcaraz J.-P."/>
            <person name="Cottet A."/>
            <person name="Casacuberta E."/>
            <person name="Monfort A."/>
            <person name="Argiriou A."/>
            <person name="Flores M."/>
            <person name="Liguori R."/>
            <person name="Vitale D."/>
            <person name="Mannhaupt G."/>
            <person name="Haase D."/>
            <person name="Schoof H."/>
            <person name="Rudd S."/>
            <person name="Zaccaria P."/>
            <person name="Mewes H.-W."/>
            <person name="Mayer K.F.X."/>
            <person name="Kaul S."/>
            <person name="Town C.D."/>
            <person name="Koo H.L."/>
            <person name="Tallon L.J."/>
            <person name="Jenkins J."/>
            <person name="Rooney T."/>
            <person name="Rizzo M."/>
            <person name="Walts A."/>
            <person name="Utterback T."/>
            <person name="Fujii C.Y."/>
            <person name="Shea T.P."/>
            <person name="Creasy T.H."/>
            <person name="Haas B."/>
            <person name="Maiti R."/>
            <person name="Wu D."/>
            <person name="Peterson J."/>
            <person name="Van Aken S."/>
            <person name="Pai G."/>
            <person name="Militscher J."/>
            <person name="Sellers P."/>
            <person name="Gill J.E."/>
            <person name="Feldblyum T.V."/>
            <person name="Preuss D."/>
            <person name="Lin X."/>
            <person name="Nierman W.C."/>
            <person name="Salzberg S.L."/>
            <person name="White O."/>
            <person name="Venter J.C."/>
            <person name="Fraser C.M."/>
            <person name="Kaneko T."/>
            <person name="Nakamura Y."/>
            <person name="Sato S."/>
            <person name="Kato T."/>
            <person name="Asamizu E."/>
            <person name="Sasamoto S."/>
            <person name="Kimura T."/>
            <person name="Idesawa K."/>
            <person name="Kawashima K."/>
            <person name="Kishida Y."/>
            <person name="Kiyokawa C."/>
            <person name="Kohara M."/>
            <person name="Matsumoto M."/>
            <person name="Matsuno A."/>
            <person name="Muraki A."/>
            <person name="Nakayama S."/>
            <person name="Nakazaki N."/>
            <person name="Shinpo S."/>
            <person name="Takeuchi C."/>
            <person name="Wada T."/>
            <person name="Watanabe A."/>
            <person name="Yamada M."/>
            <person name="Yasuda M."/>
            <person name="Tabata S."/>
        </authorList>
    </citation>
    <scope>NUCLEOTIDE SEQUENCE [LARGE SCALE GENOMIC DNA]</scope>
    <source>
        <strain>cv. Columbia</strain>
    </source>
</reference>
<reference key="2">
    <citation type="journal article" date="2017" name="Plant J.">
        <title>Araport11: a complete reannotation of the Arabidopsis thaliana reference genome.</title>
        <authorList>
            <person name="Cheng C.Y."/>
            <person name="Krishnakumar V."/>
            <person name="Chan A.P."/>
            <person name="Thibaud-Nissen F."/>
            <person name="Schobel S."/>
            <person name="Town C.D."/>
        </authorList>
    </citation>
    <scope>GENOME REANNOTATION</scope>
    <source>
        <strain>cv. Columbia</strain>
    </source>
</reference>
<reference key="3">
    <citation type="submission" date="2004-10" db="EMBL/GenBank/DDBJ databases">
        <title>Arabidopsis ORF clones.</title>
        <authorList>
            <person name="Cheuk R.F."/>
            <person name="Chen H."/>
            <person name="Kim C.J."/>
            <person name="Shinn P."/>
            <person name="Ecker J.R."/>
        </authorList>
    </citation>
    <scope>NUCLEOTIDE SEQUENCE [LARGE SCALE MRNA]</scope>
    <source>
        <strain>cv. Columbia</strain>
    </source>
</reference>
<reference key="4">
    <citation type="journal article" date="2005" name="Plant Physiol.">
        <title>An expression and bioinformatics analysis of the Arabidopsis serine carboxypeptidase-like gene family.</title>
        <authorList>
            <person name="Fraser C.M."/>
            <person name="Rider L.W."/>
            <person name="Chapple C."/>
        </authorList>
    </citation>
    <scope>GENE FAMILY</scope>
    <scope>TISSUE SPECIFICITY</scope>
    <scope>NOMENCLATURE</scope>
</reference>
<protein>
    <recommendedName>
        <fullName>Serine carboxypeptidase-like 27</fullName>
        <ecNumber>3.4.16.-</ecNumber>
    </recommendedName>
</protein>
<proteinExistence type="evidence at transcript level"/>
<accession>Q9SFB5</accession>